<evidence type="ECO:0000250" key="1">
    <source>
        <dbReference type="UniProtKB" id="Q3UDE2"/>
    </source>
</evidence>
<evidence type="ECO:0000250" key="2">
    <source>
        <dbReference type="UniProtKB" id="Q6ZT98"/>
    </source>
</evidence>
<evidence type="ECO:0000255" key="3">
    <source>
        <dbReference type="PROSITE-ProRule" id="PRU00568"/>
    </source>
</evidence>
<evidence type="ECO:0000256" key="4">
    <source>
        <dbReference type="SAM" id="MobiDB-lite"/>
    </source>
</evidence>
<evidence type="ECO:0000269" key="5">
    <source>
    </source>
</evidence>
<evidence type="ECO:0000269" key="6">
    <source>
    </source>
</evidence>
<evidence type="ECO:0000269" key="7">
    <source>
    </source>
</evidence>
<evidence type="ECO:0000305" key="8"/>
<evidence type="ECO:0000305" key="9">
    <source>
    </source>
</evidence>
<comment type="function">
    <text evidence="5 6 7">Negatively regulates post-translational modifications of tubulin, including detyrosination of the C-terminus and polyglutamylation of glutamate residues (PubMed:20162578, PubMed:23251473). Also, indirectly promotes histone H4 trimethylation at 'Lys-20' (H4K20me3) (PubMed:23251473). Probably by controlling tubulin and/or histone H4 post-translational modifications, plays a role in mitosis and in maintaining chromosome number stability (PubMed:20162578, PubMed:23251473). During RNA virus-mediated infection, acts as a negative regulator of the RIG-I pathway by preventing MAVS binding to TBK1 and IKBKE (PubMed:28011935).</text>
</comment>
<comment type="subunit">
    <text evidence="6 7">Interacts with MAVS; the interaction prevents MAVS binding to TBK1 and IKBKE (PubMed:28011935). Interacts (via N-terminus) with TBK1 (via protein kinase domain) (PubMed:28011935). Interacts (via TTL domain) with IKBKE (via protein kinase domain) (PubMed:28011935). Interacts with tubulin alpha (PubMed:23251473). Interacts with histone H3 and histone H4 (when trimethylated at 'Lys-20' (H4K20me3)) (PubMed:23251473). Interacts with CBX3 (PubMed:23251473).</text>
</comment>
<comment type="interaction">
    <interactant intactId="EBI-923010">
        <id>Q14166</id>
    </interactant>
    <interactant intactId="EBI-357034">
        <id>P25685</id>
        <label>DNAJB1</label>
    </interactant>
    <organismsDiffer>false</organismsDiffer>
    <experiments>7</experiments>
</comment>
<comment type="interaction">
    <interactant intactId="EBI-923010">
        <id>Q14166</id>
    </interactant>
    <interactant intactId="EBI-352162">
        <id>P68104</id>
        <label>EEF1A1</label>
    </interactant>
    <organismsDiffer>false</organismsDiffer>
    <experiments>7</experiments>
</comment>
<comment type="interaction">
    <interactant intactId="EBI-923010">
        <id>Q14166</id>
    </interactant>
    <interactant intactId="EBI-354943">
        <id>Q05639</id>
        <label>EEF1A2</label>
    </interactant>
    <organismsDiffer>false</organismsDiffer>
    <experiments>6</experiments>
</comment>
<comment type="interaction">
    <interactant intactId="EBI-923010">
        <id>Q14166</id>
    </interactant>
    <interactant intactId="EBI-2807642">
        <id>Q8WU58</id>
        <label>FAM222B</label>
    </interactant>
    <organismsDiffer>false</organismsDiffer>
    <experiments>3</experiments>
</comment>
<comment type="interaction">
    <interactant intactId="EBI-923010">
        <id>Q14166</id>
    </interactant>
    <interactant intactId="EBI-11986293">
        <id>P0CG20</id>
        <label>PRR35</label>
    </interactant>
    <organismsDiffer>false</organismsDiffer>
    <experiments>3</experiments>
</comment>
<comment type="subcellular location">
    <subcellularLocation>
        <location evidence="5 7">Cytoplasm</location>
    </subcellularLocation>
    <subcellularLocation>
        <location evidence="9">Midbody</location>
    </subcellularLocation>
    <subcellularLocation>
        <location evidence="9">Cytoplasm</location>
        <location evidence="9">Cytoskeleton</location>
        <location evidence="9">Microtubule organizing center</location>
        <location evidence="9">Centrosome</location>
    </subcellularLocation>
    <subcellularLocation>
        <location evidence="9">Cytoplasm</location>
        <location evidence="9">Cytoskeleton</location>
        <location evidence="9">Spindle</location>
    </subcellularLocation>
    <subcellularLocation>
        <location evidence="6">Nucleus</location>
    </subcellularLocation>
    <text evidence="5 7">Predominantly localizes in the cytoplasm (PubMed:28011935). Partially colocalizes with vimentin in prostate cancer cells (PubMed:20162578).</text>
</comment>
<comment type="tissue specificity">
    <text evidence="5">Expressed in the basal layer of prostate and endothelial cells. Increased expression in prostatic intraepithelial neoplasia and metastatic lesions.</text>
</comment>
<comment type="similarity">
    <text evidence="8">Belongs to the tubulin--tyrosine ligase family.</text>
</comment>
<comment type="caution">
    <text evidence="1 6">Although it belongs to the tubulin--tyrosine ligase family, the TTL domain lacks some of the ATP binding sites predicted to be essential for TTL activity (PubMed:23251473). Lacks tyrosine ligase activity in vitro (PubMed:23251473). Lacks glutamylation activity in vitro (By similarity). Although TTLL12 contains a potential SET-like domain in the N-terminus, it does not have lysine methyltransferase activity towards histone in vitro (PubMed:23251473).</text>
</comment>
<keyword id="KW-0067">ATP-binding</keyword>
<keyword id="KW-0963">Cytoplasm</keyword>
<keyword id="KW-0206">Cytoskeleton</keyword>
<keyword id="KW-0391">Immunity</keyword>
<keyword id="KW-0399">Innate immunity</keyword>
<keyword id="KW-0547">Nucleotide-binding</keyword>
<keyword id="KW-0539">Nucleus</keyword>
<keyword id="KW-1267">Proteomics identification</keyword>
<keyword id="KW-1185">Reference proteome</keyword>
<proteinExistence type="evidence at protein level"/>
<reference key="1">
    <citation type="journal article" date="2004" name="Genome Biol.">
        <title>A genome annotation-driven approach to cloning the human ORFeome.</title>
        <authorList>
            <person name="Collins J.E."/>
            <person name="Wright C.L."/>
            <person name="Edwards C.A."/>
            <person name="Davis M.P."/>
            <person name="Grinham J.A."/>
            <person name="Cole C.G."/>
            <person name="Goward M.E."/>
            <person name="Aguado B."/>
            <person name="Mallya M."/>
            <person name="Mokrab Y."/>
            <person name="Huckle E.J."/>
            <person name="Beare D.M."/>
            <person name="Dunham I."/>
        </authorList>
    </citation>
    <scope>NUCLEOTIDE SEQUENCE [LARGE SCALE MRNA]</scope>
</reference>
<reference key="2">
    <citation type="journal article" date="1999" name="Nature">
        <title>The DNA sequence of human chromosome 22.</title>
        <authorList>
            <person name="Dunham I."/>
            <person name="Hunt A.R."/>
            <person name="Collins J.E."/>
            <person name="Bruskiewich R."/>
            <person name="Beare D.M."/>
            <person name="Clamp M."/>
            <person name="Smink L.J."/>
            <person name="Ainscough R."/>
            <person name="Almeida J.P."/>
            <person name="Babbage A.K."/>
            <person name="Bagguley C."/>
            <person name="Bailey J."/>
            <person name="Barlow K.F."/>
            <person name="Bates K.N."/>
            <person name="Beasley O.P."/>
            <person name="Bird C.P."/>
            <person name="Blakey S.E."/>
            <person name="Bridgeman A.M."/>
            <person name="Buck D."/>
            <person name="Burgess J."/>
            <person name="Burrill W.D."/>
            <person name="Burton J."/>
            <person name="Carder C."/>
            <person name="Carter N.P."/>
            <person name="Chen Y."/>
            <person name="Clark G."/>
            <person name="Clegg S.M."/>
            <person name="Cobley V.E."/>
            <person name="Cole C.G."/>
            <person name="Collier R.E."/>
            <person name="Connor R."/>
            <person name="Conroy D."/>
            <person name="Corby N.R."/>
            <person name="Coville G.J."/>
            <person name="Cox A.V."/>
            <person name="Davis J."/>
            <person name="Dawson E."/>
            <person name="Dhami P.D."/>
            <person name="Dockree C."/>
            <person name="Dodsworth S.J."/>
            <person name="Durbin R.M."/>
            <person name="Ellington A.G."/>
            <person name="Evans K.L."/>
            <person name="Fey J.M."/>
            <person name="Fleming K."/>
            <person name="French L."/>
            <person name="Garner A.A."/>
            <person name="Gilbert J.G.R."/>
            <person name="Goward M.E."/>
            <person name="Grafham D.V."/>
            <person name="Griffiths M.N.D."/>
            <person name="Hall C."/>
            <person name="Hall R.E."/>
            <person name="Hall-Tamlyn G."/>
            <person name="Heathcott R.W."/>
            <person name="Ho S."/>
            <person name="Holmes S."/>
            <person name="Hunt S.E."/>
            <person name="Jones M.C."/>
            <person name="Kershaw J."/>
            <person name="Kimberley A.M."/>
            <person name="King A."/>
            <person name="Laird G.K."/>
            <person name="Langford C.F."/>
            <person name="Leversha M.A."/>
            <person name="Lloyd C."/>
            <person name="Lloyd D.M."/>
            <person name="Martyn I.D."/>
            <person name="Mashreghi-Mohammadi M."/>
            <person name="Matthews L.H."/>
            <person name="Mccann O.T."/>
            <person name="Mcclay J."/>
            <person name="Mclaren S."/>
            <person name="McMurray A.A."/>
            <person name="Milne S.A."/>
            <person name="Mortimore B.J."/>
            <person name="Odell C.N."/>
            <person name="Pavitt R."/>
            <person name="Pearce A.V."/>
            <person name="Pearson D."/>
            <person name="Phillimore B.J.C.T."/>
            <person name="Phillips S.H."/>
            <person name="Plumb R.W."/>
            <person name="Ramsay H."/>
            <person name="Ramsey Y."/>
            <person name="Rogers L."/>
            <person name="Ross M.T."/>
            <person name="Scott C.E."/>
            <person name="Sehra H.K."/>
            <person name="Skuce C.D."/>
            <person name="Smalley S."/>
            <person name="Smith M.L."/>
            <person name="Soderlund C."/>
            <person name="Spragon L."/>
            <person name="Steward C.A."/>
            <person name="Sulston J.E."/>
            <person name="Swann R.M."/>
            <person name="Vaudin M."/>
            <person name="Wall M."/>
            <person name="Wallis J.M."/>
            <person name="Whiteley M.N."/>
            <person name="Willey D.L."/>
            <person name="Williams L."/>
            <person name="Williams S.A."/>
            <person name="Williamson H."/>
            <person name="Wilmer T.E."/>
            <person name="Wilming L."/>
            <person name="Wright C.L."/>
            <person name="Hubbard T."/>
            <person name="Bentley D.R."/>
            <person name="Beck S."/>
            <person name="Rogers J."/>
            <person name="Shimizu N."/>
            <person name="Minoshima S."/>
            <person name="Kawasaki K."/>
            <person name="Sasaki T."/>
            <person name="Asakawa S."/>
            <person name="Kudoh J."/>
            <person name="Shintani A."/>
            <person name="Shibuya K."/>
            <person name="Yoshizaki Y."/>
            <person name="Aoki N."/>
            <person name="Mitsuyama S."/>
            <person name="Roe B.A."/>
            <person name="Chen F."/>
            <person name="Chu L."/>
            <person name="Crabtree J."/>
            <person name="Deschamps S."/>
            <person name="Do A."/>
            <person name="Do T."/>
            <person name="Dorman A."/>
            <person name="Fang F."/>
            <person name="Fu Y."/>
            <person name="Hu P."/>
            <person name="Hua A."/>
            <person name="Kenton S."/>
            <person name="Lai H."/>
            <person name="Lao H.I."/>
            <person name="Lewis J."/>
            <person name="Lewis S."/>
            <person name="Lin S.-P."/>
            <person name="Loh P."/>
            <person name="Malaj E."/>
            <person name="Nguyen T."/>
            <person name="Pan H."/>
            <person name="Phan S."/>
            <person name="Qi S."/>
            <person name="Qian Y."/>
            <person name="Ray L."/>
            <person name="Ren Q."/>
            <person name="Shaull S."/>
            <person name="Sloan D."/>
            <person name="Song L."/>
            <person name="Wang Q."/>
            <person name="Wang Y."/>
            <person name="Wang Z."/>
            <person name="White J."/>
            <person name="Willingham D."/>
            <person name="Wu H."/>
            <person name="Yao Z."/>
            <person name="Zhan M."/>
            <person name="Zhang G."/>
            <person name="Chissoe S."/>
            <person name="Murray J."/>
            <person name="Miller N."/>
            <person name="Minx P."/>
            <person name="Fulton R."/>
            <person name="Johnson D."/>
            <person name="Bemis G."/>
            <person name="Bentley D."/>
            <person name="Bradshaw H."/>
            <person name="Bourne S."/>
            <person name="Cordes M."/>
            <person name="Du Z."/>
            <person name="Fulton L."/>
            <person name="Goela D."/>
            <person name="Graves T."/>
            <person name="Hawkins J."/>
            <person name="Hinds K."/>
            <person name="Kemp K."/>
            <person name="Latreille P."/>
            <person name="Layman D."/>
            <person name="Ozersky P."/>
            <person name="Rohlfing T."/>
            <person name="Scheet P."/>
            <person name="Walker C."/>
            <person name="Wamsley A."/>
            <person name="Wohldmann P."/>
            <person name="Pepin K."/>
            <person name="Nelson J."/>
            <person name="Korf I."/>
            <person name="Bedell J.A."/>
            <person name="Hillier L.W."/>
            <person name="Mardis E."/>
            <person name="Waterston R."/>
            <person name="Wilson R."/>
            <person name="Emanuel B.S."/>
            <person name="Shaikh T."/>
            <person name="Kurahashi H."/>
            <person name="Saitta S."/>
            <person name="Budarf M.L."/>
            <person name="McDermid H.E."/>
            <person name="Johnson A."/>
            <person name="Wong A.C.C."/>
            <person name="Morrow B.E."/>
            <person name="Edelmann L."/>
            <person name="Kim U.J."/>
            <person name="Shizuya H."/>
            <person name="Simon M.I."/>
            <person name="Dumanski J.P."/>
            <person name="Peyrard M."/>
            <person name="Kedra D."/>
            <person name="Seroussi E."/>
            <person name="Fransson I."/>
            <person name="Tapia I."/>
            <person name="Bruder C.E."/>
            <person name="O'Brien K.P."/>
            <person name="Wilkinson P."/>
            <person name="Bodenteich A."/>
            <person name="Hartman K."/>
            <person name="Hu X."/>
            <person name="Khan A.S."/>
            <person name="Lane L."/>
            <person name="Tilahun Y."/>
            <person name="Wright H."/>
        </authorList>
    </citation>
    <scope>NUCLEOTIDE SEQUENCE [LARGE SCALE GENOMIC DNA]</scope>
</reference>
<reference key="3">
    <citation type="submission" date="2005-07" db="EMBL/GenBank/DDBJ databases">
        <authorList>
            <person name="Mural R.J."/>
            <person name="Istrail S."/>
            <person name="Sutton G.G."/>
            <person name="Florea L."/>
            <person name="Halpern A.L."/>
            <person name="Mobarry C.M."/>
            <person name="Lippert R."/>
            <person name="Walenz B."/>
            <person name="Shatkay H."/>
            <person name="Dew I."/>
            <person name="Miller J.R."/>
            <person name="Flanigan M.J."/>
            <person name="Edwards N.J."/>
            <person name="Bolanos R."/>
            <person name="Fasulo D."/>
            <person name="Halldorsson B.V."/>
            <person name="Hannenhalli S."/>
            <person name="Turner R."/>
            <person name="Yooseph S."/>
            <person name="Lu F."/>
            <person name="Nusskern D.R."/>
            <person name="Shue B.C."/>
            <person name="Zheng X.H."/>
            <person name="Zhong F."/>
            <person name="Delcher A.L."/>
            <person name="Huson D.H."/>
            <person name="Kravitz S.A."/>
            <person name="Mouchard L."/>
            <person name="Reinert K."/>
            <person name="Remington K.A."/>
            <person name="Clark A.G."/>
            <person name="Waterman M.S."/>
            <person name="Eichler E.E."/>
            <person name="Adams M.D."/>
            <person name="Hunkapiller M.W."/>
            <person name="Myers E.W."/>
            <person name="Venter J.C."/>
        </authorList>
    </citation>
    <scope>NUCLEOTIDE SEQUENCE [LARGE SCALE GENOMIC DNA]</scope>
</reference>
<reference key="4">
    <citation type="journal article" date="2004" name="Genome Res.">
        <title>The status, quality, and expansion of the NIH full-length cDNA project: the Mammalian Gene Collection (MGC).</title>
        <authorList>
            <consortium name="The MGC Project Team"/>
        </authorList>
    </citation>
    <scope>NUCLEOTIDE SEQUENCE [LARGE SCALE MRNA]</scope>
    <source>
        <tissue>Placenta</tissue>
    </source>
</reference>
<reference key="5">
    <citation type="journal article" date="1995" name="DNA Res.">
        <title>Prediction of the coding sequences of unidentified human genes. IV. The coding sequences of 40 new genes (KIAA0121-KIAA0160) deduced by analysis of cDNA clones from human cell line KG-1.</title>
        <authorList>
            <person name="Nagase T."/>
            <person name="Seki N."/>
            <person name="Tanaka A."/>
            <person name="Ishikawa K."/>
            <person name="Nomura N."/>
        </authorList>
    </citation>
    <scope>NUCLEOTIDE SEQUENCE [LARGE SCALE MRNA] OF 7-644</scope>
    <source>
        <tissue>Bone marrow</tissue>
    </source>
</reference>
<reference key="6">
    <citation type="journal article" date="2006" name="Cell">
        <title>Global, in vivo, and site-specific phosphorylation dynamics in signaling networks.</title>
        <authorList>
            <person name="Olsen J.V."/>
            <person name="Blagoev B."/>
            <person name="Gnad F."/>
            <person name="Macek B."/>
            <person name="Kumar C."/>
            <person name="Mortensen P."/>
            <person name="Mann M."/>
        </authorList>
    </citation>
    <scope>IDENTIFICATION BY MASS SPECTROMETRY [LARGE SCALE ANALYSIS]</scope>
    <source>
        <tissue>Cervix carcinoma</tissue>
    </source>
</reference>
<reference key="7">
    <citation type="journal article" date="2008" name="Proc. Natl. Acad. Sci. U.S.A.">
        <title>A quantitative atlas of mitotic phosphorylation.</title>
        <authorList>
            <person name="Dephoure N."/>
            <person name="Zhou C."/>
            <person name="Villen J."/>
            <person name="Beausoleil S.A."/>
            <person name="Bakalarski C.E."/>
            <person name="Elledge S.J."/>
            <person name="Gygi S.P."/>
        </authorList>
    </citation>
    <scope>IDENTIFICATION BY MASS SPECTROMETRY [LARGE SCALE ANALYSIS]</scope>
    <source>
        <tissue>Cervix carcinoma</tissue>
    </source>
</reference>
<reference key="8">
    <citation type="journal article" date="2009" name="Anal. Chem.">
        <title>Lys-N and trypsin cover complementary parts of the phosphoproteome in a refined SCX-based approach.</title>
        <authorList>
            <person name="Gauci S."/>
            <person name="Helbig A.O."/>
            <person name="Slijper M."/>
            <person name="Krijgsveld J."/>
            <person name="Heck A.J."/>
            <person name="Mohammed S."/>
        </authorList>
    </citation>
    <scope>IDENTIFICATION BY MASS SPECTROMETRY [LARGE SCALE ANALYSIS]</scope>
</reference>
<reference key="9">
    <citation type="journal article" date="2009" name="Sci. Signal.">
        <title>Quantitative phosphoproteomic analysis of T cell receptor signaling reveals system-wide modulation of protein-protein interactions.</title>
        <authorList>
            <person name="Mayya V."/>
            <person name="Lundgren D.H."/>
            <person name="Hwang S.-I."/>
            <person name="Rezaul K."/>
            <person name="Wu L."/>
            <person name="Eng J.K."/>
            <person name="Rodionov V."/>
            <person name="Han D.K."/>
        </authorList>
    </citation>
    <scope>IDENTIFICATION BY MASS SPECTROMETRY [LARGE SCALE ANALYSIS]</scope>
    <source>
        <tissue>Leukemic T-cell</tissue>
    </source>
</reference>
<reference key="10">
    <citation type="journal article" date="2010" name="Int. J. Cancer">
        <title>Tubulin tyrosine ligase like 12 links to prostate cancer through tubulin posttranslational modification and chromosome ploidy.</title>
        <authorList>
            <person name="Wasylyk C."/>
            <person name="Zambrano A."/>
            <person name="Zhao C."/>
            <person name="Brants J."/>
            <person name="Abecassis J."/>
            <person name="Schalken J.A."/>
            <person name="Rogatsch H."/>
            <person name="Schaefer G."/>
            <person name="Pycha A."/>
            <person name="Klocker H."/>
            <person name="Wasylyk B."/>
        </authorList>
    </citation>
    <scope>FUNCTION</scope>
    <scope>SUBCELLULAR LOCATION</scope>
    <scope>TISSUE SPECIFICITY</scope>
</reference>
<reference key="11">
    <citation type="journal article" date="2010" name="Sci. Signal.">
        <title>Quantitative phosphoproteomics reveals widespread full phosphorylation site occupancy during mitosis.</title>
        <authorList>
            <person name="Olsen J.V."/>
            <person name="Vermeulen M."/>
            <person name="Santamaria A."/>
            <person name="Kumar C."/>
            <person name="Miller M.L."/>
            <person name="Jensen L.J."/>
            <person name="Gnad F."/>
            <person name="Cox J."/>
            <person name="Jensen T.S."/>
            <person name="Nigg E.A."/>
            <person name="Brunak S."/>
            <person name="Mann M."/>
        </authorList>
    </citation>
    <scope>IDENTIFICATION BY MASS SPECTROMETRY [LARGE SCALE ANALYSIS]</scope>
    <source>
        <tissue>Cervix carcinoma</tissue>
    </source>
</reference>
<reference key="12">
    <citation type="journal article" date="2011" name="BMC Syst. Biol.">
        <title>Initial characterization of the human central proteome.</title>
        <authorList>
            <person name="Burkard T.R."/>
            <person name="Planyavsky M."/>
            <person name="Kaupe I."/>
            <person name="Breitwieser F.P."/>
            <person name="Buerckstuemmer T."/>
            <person name="Bennett K.L."/>
            <person name="Superti-Furga G."/>
            <person name="Colinge J."/>
        </authorList>
    </citation>
    <scope>IDENTIFICATION BY MASS SPECTROMETRY [LARGE SCALE ANALYSIS]</scope>
</reference>
<reference key="13">
    <citation type="journal article" date="2011" name="Sci. Signal.">
        <title>System-wide temporal characterization of the proteome and phosphoproteome of human embryonic stem cell differentiation.</title>
        <authorList>
            <person name="Rigbolt K.T."/>
            <person name="Prokhorova T.A."/>
            <person name="Akimov V."/>
            <person name="Henningsen J."/>
            <person name="Johansen P.T."/>
            <person name="Kratchmarova I."/>
            <person name="Kassem M."/>
            <person name="Mann M."/>
            <person name="Olsen J.V."/>
            <person name="Blagoev B."/>
        </authorList>
    </citation>
    <scope>IDENTIFICATION BY MASS SPECTROMETRY [LARGE SCALE ANALYSIS]</scope>
</reference>
<reference key="14">
    <citation type="journal article" date="2012" name="PLoS ONE">
        <title>Tubulin tyrosine ligase like 12, a TTLL family member with SET- and TTL-like domains and roles in histone and tubulin modifications and mitosis.</title>
        <authorList>
            <person name="Brants J."/>
            <person name="Semenchenko K."/>
            <person name="Wasylyk C."/>
            <person name="Robert A."/>
            <person name="Carles A."/>
            <person name="Zambrano A."/>
            <person name="Pradeau-Aubreton K."/>
            <person name="Birck C."/>
            <person name="Schalken J.A."/>
            <person name="Poch O."/>
            <person name="de Mey J."/>
            <person name="Wasylyk B."/>
        </authorList>
    </citation>
    <scope>FUNCTION</scope>
    <scope>LACK OF TUBULIN TYROSINE LIGASE ACTIVITY</scope>
    <scope>INTERACTION WITH CBX3; HISTONE H3; HISTONE H4 AND TUBULIN ALPHA</scope>
    <scope>SUBCELLULAR LOCATION</scope>
</reference>
<reference key="15">
    <citation type="journal article" date="2013" name="J. Proteome Res.">
        <title>Toward a comprehensive characterization of a human cancer cell phosphoproteome.</title>
        <authorList>
            <person name="Zhou H."/>
            <person name="Di Palma S."/>
            <person name="Preisinger C."/>
            <person name="Peng M."/>
            <person name="Polat A.N."/>
            <person name="Heck A.J."/>
            <person name="Mohammed S."/>
        </authorList>
    </citation>
    <scope>IDENTIFICATION BY MASS SPECTROMETRY [LARGE SCALE ANALYSIS]</scope>
    <source>
        <tissue>Cervix carcinoma</tissue>
        <tissue>Erythroleukemia</tissue>
    </source>
</reference>
<reference key="16">
    <citation type="journal article" date="2017" name="J. Immunol.">
        <title>TTLL12 Inhibits the Activation of Cellular Antiviral Signaling through Interaction with VISA/MAVS.</title>
        <authorList>
            <person name="Ju L.G."/>
            <person name="Zhu Y."/>
            <person name="Lei P.J."/>
            <person name="Yan D."/>
            <person name="Zhu K."/>
            <person name="Wang X."/>
            <person name="Li Q.L."/>
            <person name="Li X.J."/>
            <person name="Chen J.W."/>
            <person name="Li L.Y."/>
            <person name="Wu M."/>
        </authorList>
    </citation>
    <scope>FUNCTION</scope>
    <scope>INTERACTION WITH MAVS; TBK1 AND IKBKE</scope>
    <scope>SUBCELLULAR LOCATION</scope>
    <scope>MUTAGENESIS OF TYR-244 AND GLU-605</scope>
</reference>
<feature type="chain" id="PRO_0000212446" description="Tubulin--tyrosine ligase-like protein 12">
    <location>
        <begin position="1"/>
        <end position="644"/>
    </location>
</feature>
<feature type="domain" description="TTL" evidence="3">
    <location>
        <begin position="300"/>
        <end position="644"/>
    </location>
</feature>
<feature type="region of interest" description="Disordered" evidence="4">
    <location>
        <begin position="1"/>
        <end position="25"/>
    </location>
</feature>
<feature type="compositionally biased region" description="Basic and acidic residues" evidence="4">
    <location>
        <begin position="1"/>
        <end position="13"/>
    </location>
</feature>
<feature type="binding site" evidence="2">
    <location>
        <begin position="450"/>
        <end position="453"/>
    </location>
    <ligand>
        <name>ATP</name>
        <dbReference type="ChEBI" id="CHEBI:30616"/>
    </ligand>
</feature>
<feature type="binding site" evidence="2">
    <location>
        <position position="468"/>
    </location>
    <ligand>
        <name>ATP</name>
        <dbReference type="ChEBI" id="CHEBI:30616"/>
    </ligand>
</feature>
<feature type="binding site" evidence="2">
    <location>
        <position position="470"/>
    </location>
    <ligand>
        <name>ATP</name>
        <dbReference type="ChEBI" id="CHEBI:30616"/>
    </ligand>
</feature>
<feature type="sequence variant" id="VAR_052413" description="In dbSNP:rs138951.">
    <original>R</original>
    <variation>W</variation>
    <location>
        <position position="84"/>
    </location>
</feature>
<feature type="sequence variant" id="VAR_052414" description="In dbSNP:rs13058467.">
    <original>N</original>
    <variation>S</variation>
    <location>
        <position position="95"/>
    </location>
</feature>
<feature type="sequence variant" id="VAR_052415" description="In dbSNP:rs11704935.">
    <original>V</original>
    <variation>M</variation>
    <location>
        <position position="297"/>
    </location>
</feature>
<feature type="sequence variant" id="VAR_052416" description="In dbSNP:rs34074034.">
    <original>V</original>
    <variation>M</variation>
    <location>
        <position position="464"/>
    </location>
</feature>
<feature type="mutagenesis site" description="Decreases expression of IFNB1 mRNA following infection with Sendai virus." evidence="7">
    <original>Y</original>
    <variation>A</variation>
    <location>
        <position position="244"/>
    </location>
</feature>
<feature type="mutagenesis site" description="Decreases expression of IFNB1 mRNA following infection with Sendai virus." evidence="7">
    <original>E</original>
    <variation>A</variation>
    <location>
        <position position="605"/>
    </location>
</feature>
<name>TTL12_HUMAN</name>
<accession>Q14166</accession>
<accession>Q20WK5</accession>
<accession>Q9UGU3</accession>
<sequence>MEAERGPERRPAERSSPGQTPEEGAQALAEFAALHGPALRASGVPERYWGRLLHKLEHEVFDAGEVFGIMQVEEVEEEEDEAAREVRKQQPNPGNELCYKVIVTRESGLQAAHPNSIFLIDHAWTCRVEHARQQLQQVPGLLHRMANLMGIEFHGELPSTEAVALVLEEMWKFNQTYQLAHGTAEEKMPVWYIMDEFGSRIQHADVPSFATAPFFYMPQQVAYTLLWPLRDLDTGEEVTRDFAYGETDPLIRKCMLLPWAPTDMLDLSSCTPEPPAEHYQAILEENKEKLPLDINPVVHPHGHIFKVYTDVQQVASSLTHPRFTLTQSEADADILFNFSHFKDYRKLSQERPGVLLNQFPCENLLTVKDCLASIARRAGGPEGPPWLPRTFNLRTELPQFVSYFQQRERWGEDNHWICKPWNLARSLDTHVTKSLHSIIRHRESTPKVVSKYIESPVLFLREDVGKVKFDIRYIVLLRSVRPLRLFVYDVFWLRFSNRAFALNDLDDYEKHFTVMNYDPDVVLKQVHCEEFIPEFEKQYPEFPWTDVQAEIFRAFTELFQVACAKPPPLGLCDYPSSRAMYAVDLMLKWDNGPDGRRVMQPQILEVNFNPDCERACRYHPTFFNDVFSTLFLDQPGGCHVTCLV</sequence>
<gene>
    <name type="primary">TTLL12</name>
    <name type="synonym">KIAA0153</name>
</gene>
<organism>
    <name type="scientific">Homo sapiens</name>
    <name type="common">Human</name>
    <dbReference type="NCBI Taxonomy" id="9606"/>
    <lineage>
        <taxon>Eukaryota</taxon>
        <taxon>Metazoa</taxon>
        <taxon>Chordata</taxon>
        <taxon>Craniata</taxon>
        <taxon>Vertebrata</taxon>
        <taxon>Euteleostomi</taxon>
        <taxon>Mammalia</taxon>
        <taxon>Eutheria</taxon>
        <taxon>Euarchontoglires</taxon>
        <taxon>Primates</taxon>
        <taxon>Haplorrhini</taxon>
        <taxon>Catarrhini</taxon>
        <taxon>Hominidae</taxon>
        <taxon>Homo</taxon>
    </lineage>
</organism>
<dbReference type="EMBL" id="CT841516">
    <property type="protein sequence ID" value="CAJ86446.1"/>
    <property type="molecule type" value="mRNA"/>
</dbReference>
<dbReference type="EMBL" id="Z82214">
    <property type="status" value="NOT_ANNOTATED_CDS"/>
    <property type="molecule type" value="Genomic_DNA"/>
</dbReference>
<dbReference type="EMBL" id="CH471138">
    <property type="protein sequence ID" value="EAW73291.1"/>
    <property type="molecule type" value="Genomic_DNA"/>
</dbReference>
<dbReference type="EMBL" id="BC001070">
    <property type="protein sequence ID" value="AAH01070.1"/>
    <property type="molecule type" value="mRNA"/>
</dbReference>
<dbReference type="EMBL" id="D63487">
    <property type="protein sequence ID" value="BAA09774.1"/>
    <property type="molecule type" value="mRNA"/>
</dbReference>
<dbReference type="CCDS" id="CCDS14047.1"/>
<dbReference type="RefSeq" id="NP_055955.1">
    <property type="nucleotide sequence ID" value="NM_015140.4"/>
</dbReference>
<dbReference type="SMR" id="Q14166"/>
<dbReference type="BioGRID" id="116782">
    <property type="interactions" value="134"/>
</dbReference>
<dbReference type="FunCoup" id="Q14166">
    <property type="interactions" value="2307"/>
</dbReference>
<dbReference type="IntAct" id="Q14166">
    <property type="interactions" value="46"/>
</dbReference>
<dbReference type="MINT" id="Q14166"/>
<dbReference type="STRING" id="9606.ENSP00000216129"/>
<dbReference type="GlyGen" id="Q14166">
    <property type="glycosylation" value="1 site, 1 O-linked glycan (1 site)"/>
</dbReference>
<dbReference type="iPTMnet" id="Q14166"/>
<dbReference type="PhosphoSitePlus" id="Q14166"/>
<dbReference type="SwissPalm" id="Q14166"/>
<dbReference type="BioMuta" id="TTLL12"/>
<dbReference type="DMDM" id="20455527"/>
<dbReference type="jPOST" id="Q14166"/>
<dbReference type="MassIVE" id="Q14166"/>
<dbReference type="PaxDb" id="9606-ENSP00000216129"/>
<dbReference type="PeptideAtlas" id="Q14166"/>
<dbReference type="PRIDE" id="Q14166"/>
<dbReference type="ProteomicsDB" id="59894"/>
<dbReference type="Pumba" id="Q14166"/>
<dbReference type="Antibodypedia" id="27494">
    <property type="antibodies" value="278 antibodies from 18 providers"/>
</dbReference>
<dbReference type="DNASU" id="23170"/>
<dbReference type="Ensembl" id="ENST00000216129.7">
    <property type="protein sequence ID" value="ENSP00000216129.6"/>
    <property type="gene ID" value="ENSG00000100304.13"/>
</dbReference>
<dbReference type="GeneID" id="23170"/>
<dbReference type="KEGG" id="hsa:23170"/>
<dbReference type="MANE-Select" id="ENST00000216129.7">
    <property type="protein sequence ID" value="ENSP00000216129.6"/>
    <property type="RefSeq nucleotide sequence ID" value="NM_015140.4"/>
    <property type="RefSeq protein sequence ID" value="NP_055955.1"/>
</dbReference>
<dbReference type="UCSC" id="uc003bdq.4">
    <property type="organism name" value="human"/>
</dbReference>
<dbReference type="AGR" id="HGNC:28974"/>
<dbReference type="CTD" id="23170"/>
<dbReference type="DisGeNET" id="23170"/>
<dbReference type="GeneCards" id="TTLL12"/>
<dbReference type="HGNC" id="HGNC:28974">
    <property type="gene designation" value="TTLL12"/>
</dbReference>
<dbReference type="HPA" id="ENSG00000100304">
    <property type="expression patterns" value="Tissue enhanced (esophagus)"/>
</dbReference>
<dbReference type="MIM" id="619410">
    <property type="type" value="gene"/>
</dbReference>
<dbReference type="neXtProt" id="NX_Q14166"/>
<dbReference type="OpenTargets" id="ENSG00000100304"/>
<dbReference type="PharmGKB" id="PA143485663"/>
<dbReference type="VEuPathDB" id="HostDB:ENSG00000100304"/>
<dbReference type="eggNOG" id="KOG2155">
    <property type="taxonomic scope" value="Eukaryota"/>
</dbReference>
<dbReference type="GeneTree" id="ENSGT00390000006760"/>
<dbReference type="HOGENOM" id="CLU_018324_0_0_1"/>
<dbReference type="InParanoid" id="Q14166"/>
<dbReference type="OMA" id="WTPDCKR"/>
<dbReference type="OrthoDB" id="60477at2759"/>
<dbReference type="PAN-GO" id="Q14166">
    <property type="GO annotations" value="1 GO annotation based on evolutionary models"/>
</dbReference>
<dbReference type="PhylomeDB" id="Q14166"/>
<dbReference type="TreeFam" id="TF313037"/>
<dbReference type="PathwayCommons" id="Q14166"/>
<dbReference type="Reactome" id="R-HSA-8955332">
    <property type="pathway name" value="Carboxyterminal post-translational modifications of tubulin"/>
</dbReference>
<dbReference type="SignaLink" id="Q14166"/>
<dbReference type="BioGRID-ORCS" id="23170">
    <property type="hits" value="11 hits in 1155 CRISPR screens"/>
</dbReference>
<dbReference type="ChiTaRS" id="TTLL12">
    <property type="organism name" value="human"/>
</dbReference>
<dbReference type="GenomeRNAi" id="23170"/>
<dbReference type="Pharos" id="Q14166">
    <property type="development level" value="Tbio"/>
</dbReference>
<dbReference type="PRO" id="PR:Q14166"/>
<dbReference type="Proteomes" id="UP000005640">
    <property type="component" value="Chromosome 22"/>
</dbReference>
<dbReference type="RNAct" id="Q14166">
    <property type="molecule type" value="protein"/>
</dbReference>
<dbReference type="Bgee" id="ENSG00000100304">
    <property type="expression patterns" value="Expressed in lower esophagus mucosa and 183 other cell types or tissues"/>
</dbReference>
<dbReference type="ExpressionAtlas" id="Q14166">
    <property type="expression patterns" value="baseline and differential"/>
</dbReference>
<dbReference type="GO" id="GO:0005813">
    <property type="term" value="C:centrosome"/>
    <property type="evidence" value="ECO:0007669"/>
    <property type="project" value="UniProtKB-SubCell"/>
</dbReference>
<dbReference type="GO" id="GO:0005737">
    <property type="term" value="C:cytoplasm"/>
    <property type="evidence" value="ECO:0000314"/>
    <property type="project" value="UniProtKB"/>
</dbReference>
<dbReference type="GO" id="GO:0005829">
    <property type="term" value="C:cytosol"/>
    <property type="evidence" value="ECO:0000314"/>
    <property type="project" value="HPA"/>
</dbReference>
<dbReference type="GO" id="GO:0030496">
    <property type="term" value="C:midbody"/>
    <property type="evidence" value="ECO:0007669"/>
    <property type="project" value="UniProtKB-SubCell"/>
</dbReference>
<dbReference type="GO" id="GO:0005634">
    <property type="term" value="C:nucleus"/>
    <property type="evidence" value="ECO:0007669"/>
    <property type="project" value="UniProtKB-SubCell"/>
</dbReference>
<dbReference type="GO" id="GO:0005886">
    <property type="term" value="C:plasma membrane"/>
    <property type="evidence" value="ECO:0000314"/>
    <property type="project" value="HPA"/>
</dbReference>
<dbReference type="GO" id="GO:0005819">
    <property type="term" value="C:spindle"/>
    <property type="evidence" value="ECO:0007669"/>
    <property type="project" value="UniProtKB-SubCell"/>
</dbReference>
<dbReference type="GO" id="GO:0005524">
    <property type="term" value="F:ATP binding"/>
    <property type="evidence" value="ECO:0007669"/>
    <property type="project" value="UniProtKB-KW"/>
</dbReference>
<dbReference type="GO" id="GO:0140005">
    <property type="term" value="F:histone H4K20me2 reader activity"/>
    <property type="evidence" value="ECO:0000314"/>
    <property type="project" value="UniProtKB"/>
</dbReference>
<dbReference type="GO" id="GO:0045087">
    <property type="term" value="P:innate immune response"/>
    <property type="evidence" value="ECO:0007669"/>
    <property type="project" value="UniProtKB-KW"/>
</dbReference>
<dbReference type="GO" id="GO:0060339">
    <property type="term" value="P:negative regulation of type I interferon-mediated signaling pathway"/>
    <property type="evidence" value="ECO:0000315"/>
    <property type="project" value="UniProtKB"/>
</dbReference>
<dbReference type="GO" id="GO:0036211">
    <property type="term" value="P:protein modification process"/>
    <property type="evidence" value="ECO:0007669"/>
    <property type="project" value="InterPro"/>
</dbReference>
<dbReference type="GO" id="GO:0007346">
    <property type="term" value="P:regulation of mitotic cell cycle"/>
    <property type="evidence" value="ECO:0000315"/>
    <property type="project" value="UniProtKB"/>
</dbReference>
<dbReference type="Gene3D" id="3.30.470.20">
    <property type="entry name" value="ATP-grasp fold, B domain"/>
    <property type="match status" value="1"/>
</dbReference>
<dbReference type="InterPro" id="IPR004344">
    <property type="entry name" value="TTL/TTLL_fam"/>
</dbReference>
<dbReference type="InterPro" id="IPR027749">
    <property type="entry name" value="TTLL12"/>
</dbReference>
<dbReference type="PANTHER" id="PTHR46088">
    <property type="entry name" value="TUBULIN--TYROSINE LIGASE-LIKE PROTEIN 12"/>
    <property type="match status" value="1"/>
</dbReference>
<dbReference type="PANTHER" id="PTHR46088:SF1">
    <property type="entry name" value="TUBULIN--TYROSINE LIGASE-LIKE PROTEIN 12"/>
    <property type="match status" value="1"/>
</dbReference>
<dbReference type="Pfam" id="PF03133">
    <property type="entry name" value="TTL"/>
    <property type="match status" value="1"/>
</dbReference>
<dbReference type="PROSITE" id="PS51221">
    <property type="entry name" value="TTL"/>
    <property type="match status" value="1"/>
</dbReference>
<protein>
    <recommendedName>
        <fullName>Tubulin--tyrosine ligase-like protein 12</fullName>
    </recommendedName>
    <alternativeName>
        <fullName evidence="8">Inactive tubulin--tyrosine ligase-like protein 12</fullName>
    </alternativeName>
</protein>